<dbReference type="EC" id="2.1.2.10" evidence="1"/>
<dbReference type="EMBL" id="AP009380">
    <property type="protein sequence ID" value="BAG33069.1"/>
    <property type="molecule type" value="Genomic_DNA"/>
</dbReference>
<dbReference type="RefSeq" id="WP_005874565.1">
    <property type="nucleotide sequence ID" value="NZ_CP025930.1"/>
</dbReference>
<dbReference type="SMR" id="B2RI74"/>
<dbReference type="GeneID" id="29255779"/>
<dbReference type="KEGG" id="pgn:PGN_0550"/>
<dbReference type="eggNOG" id="COG0404">
    <property type="taxonomic scope" value="Bacteria"/>
</dbReference>
<dbReference type="HOGENOM" id="CLU_007884_10_2_10"/>
<dbReference type="OrthoDB" id="9774591at2"/>
<dbReference type="BioCyc" id="PGIN431947:G1G2V-595-MONOMER"/>
<dbReference type="Proteomes" id="UP000008842">
    <property type="component" value="Chromosome"/>
</dbReference>
<dbReference type="GO" id="GO:0005829">
    <property type="term" value="C:cytosol"/>
    <property type="evidence" value="ECO:0007669"/>
    <property type="project" value="TreeGrafter"/>
</dbReference>
<dbReference type="GO" id="GO:0005960">
    <property type="term" value="C:glycine cleavage complex"/>
    <property type="evidence" value="ECO:0007669"/>
    <property type="project" value="InterPro"/>
</dbReference>
<dbReference type="GO" id="GO:0004047">
    <property type="term" value="F:aminomethyltransferase activity"/>
    <property type="evidence" value="ECO:0007669"/>
    <property type="project" value="UniProtKB-UniRule"/>
</dbReference>
<dbReference type="GO" id="GO:0008483">
    <property type="term" value="F:transaminase activity"/>
    <property type="evidence" value="ECO:0007669"/>
    <property type="project" value="UniProtKB-KW"/>
</dbReference>
<dbReference type="GO" id="GO:0019464">
    <property type="term" value="P:glycine decarboxylation via glycine cleavage system"/>
    <property type="evidence" value="ECO:0007669"/>
    <property type="project" value="UniProtKB-UniRule"/>
</dbReference>
<dbReference type="FunFam" id="2.40.30.110:FF:000003">
    <property type="entry name" value="Aminomethyltransferase"/>
    <property type="match status" value="1"/>
</dbReference>
<dbReference type="FunFam" id="3.30.70.1400:FF:000001">
    <property type="entry name" value="Aminomethyltransferase"/>
    <property type="match status" value="1"/>
</dbReference>
<dbReference type="Gene3D" id="2.40.30.110">
    <property type="entry name" value="Aminomethyltransferase beta-barrel domains"/>
    <property type="match status" value="1"/>
</dbReference>
<dbReference type="Gene3D" id="3.30.70.1400">
    <property type="entry name" value="Aminomethyltransferase beta-barrel domains"/>
    <property type="match status" value="1"/>
</dbReference>
<dbReference type="Gene3D" id="4.10.1250.10">
    <property type="entry name" value="Aminomethyltransferase fragment"/>
    <property type="match status" value="1"/>
</dbReference>
<dbReference type="Gene3D" id="3.30.1360.120">
    <property type="entry name" value="Probable tRNA modification gtpase trme, domain 1"/>
    <property type="match status" value="1"/>
</dbReference>
<dbReference type="HAMAP" id="MF_00259">
    <property type="entry name" value="GcvT"/>
    <property type="match status" value="1"/>
</dbReference>
<dbReference type="InterPro" id="IPR006223">
    <property type="entry name" value="GCS_T"/>
</dbReference>
<dbReference type="InterPro" id="IPR022903">
    <property type="entry name" value="GCS_T_bac"/>
</dbReference>
<dbReference type="InterPro" id="IPR013977">
    <property type="entry name" value="GCST_C"/>
</dbReference>
<dbReference type="InterPro" id="IPR006222">
    <property type="entry name" value="GCV_T_N"/>
</dbReference>
<dbReference type="InterPro" id="IPR028896">
    <property type="entry name" value="GcvT/YgfZ/DmdA"/>
</dbReference>
<dbReference type="InterPro" id="IPR029043">
    <property type="entry name" value="GcvT/YgfZ_C"/>
</dbReference>
<dbReference type="InterPro" id="IPR027266">
    <property type="entry name" value="TrmE/GcvT_dom1"/>
</dbReference>
<dbReference type="NCBIfam" id="TIGR00528">
    <property type="entry name" value="gcvT"/>
    <property type="match status" value="1"/>
</dbReference>
<dbReference type="NCBIfam" id="NF001567">
    <property type="entry name" value="PRK00389.1"/>
    <property type="match status" value="1"/>
</dbReference>
<dbReference type="PANTHER" id="PTHR43757">
    <property type="entry name" value="AMINOMETHYLTRANSFERASE"/>
    <property type="match status" value="1"/>
</dbReference>
<dbReference type="PANTHER" id="PTHR43757:SF2">
    <property type="entry name" value="AMINOMETHYLTRANSFERASE, MITOCHONDRIAL"/>
    <property type="match status" value="1"/>
</dbReference>
<dbReference type="Pfam" id="PF01571">
    <property type="entry name" value="GCV_T"/>
    <property type="match status" value="1"/>
</dbReference>
<dbReference type="Pfam" id="PF08669">
    <property type="entry name" value="GCV_T_C"/>
    <property type="match status" value="1"/>
</dbReference>
<dbReference type="PIRSF" id="PIRSF006487">
    <property type="entry name" value="GcvT"/>
    <property type="match status" value="1"/>
</dbReference>
<dbReference type="SUPFAM" id="SSF101790">
    <property type="entry name" value="Aminomethyltransferase beta-barrel domain"/>
    <property type="match status" value="1"/>
</dbReference>
<dbReference type="SUPFAM" id="SSF103025">
    <property type="entry name" value="Folate-binding domain"/>
    <property type="match status" value="1"/>
</dbReference>
<protein>
    <recommendedName>
        <fullName evidence="1">Aminomethyltransferase</fullName>
        <ecNumber evidence="1">2.1.2.10</ecNumber>
    </recommendedName>
    <alternativeName>
        <fullName evidence="1">Glycine cleavage system T protein</fullName>
    </alternativeName>
</protein>
<sequence>MKTTPFTDVHIALGAKMHEFAGYNMPIEYGGIIDEHMNVVNNVGVFDVSHMGEFWVKGPNALRFLQKVSSNDASKLAVGQVQYCCFPNNDGGIVDDFLLYRYEEEKYMMVPNAANIAKDWAWCRQQNTMGAILENASDNIAQLAVQGPKATEVMQRLTDIDLNEITYYTFKVGSFAGCPDVIISATGYTGAGGFELYFYPQYAQKIWDALFEAGKPEGIKPAGLGARDTLRLEMGFCLYGNDICDTTSPIEAGLGWITKFTDDKMDMPSRKIMEEQKAGGLKRKLVAFELKDKGIPRQHYEIANAEGQIIGEVTSGTMSPCLKKGIGMGYVATEFSKVGTELGIMVRGRQLKAEIVKPPFRK</sequence>
<reference key="1">
    <citation type="journal article" date="2008" name="DNA Res.">
        <title>Determination of the genome sequence of Porphyromonas gingivalis strain ATCC 33277 and genomic comparison with strain W83 revealed extensive genome rearrangements in P. gingivalis.</title>
        <authorList>
            <person name="Naito M."/>
            <person name="Hirakawa H."/>
            <person name="Yamashita A."/>
            <person name="Ohara N."/>
            <person name="Shoji M."/>
            <person name="Yukitake H."/>
            <person name="Nakayama K."/>
            <person name="Toh H."/>
            <person name="Yoshimura F."/>
            <person name="Kuhara S."/>
            <person name="Hattori M."/>
            <person name="Hayashi T."/>
            <person name="Nakayama K."/>
        </authorList>
    </citation>
    <scope>NUCLEOTIDE SEQUENCE [LARGE SCALE GENOMIC DNA]</scope>
    <source>
        <strain>ATCC 33277 / DSM 20709 / CIP 103683 / JCM 12257 / NCTC 11834 / 2561</strain>
    </source>
</reference>
<name>GCST_PORG3</name>
<accession>B2RI74</accession>
<feature type="chain" id="PRO_1000114102" description="Aminomethyltransferase">
    <location>
        <begin position="1"/>
        <end position="362"/>
    </location>
</feature>
<keyword id="KW-0032">Aminotransferase</keyword>
<keyword id="KW-0808">Transferase</keyword>
<proteinExistence type="inferred from homology"/>
<organism>
    <name type="scientific">Porphyromonas gingivalis (strain ATCC 33277 / DSM 20709 / CIP 103683 / JCM 12257 / NCTC 11834 / 2561)</name>
    <dbReference type="NCBI Taxonomy" id="431947"/>
    <lineage>
        <taxon>Bacteria</taxon>
        <taxon>Pseudomonadati</taxon>
        <taxon>Bacteroidota</taxon>
        <taxon>Bacteroidia</taxon>
        <taxon>Bacteroidales</taxon>
        <taxon>Porphyromonadaceae</taxon>
        <taxon>Porphyromonas</taxon>
    </lineage>
</organism>
<evidence type="ECO:0000255" key="1">
    <source>
        <dbReference type="HAMAP-Rule" id="MF_00259"/>
    </source>
</evidence>
<comment type="function">
    <text evidence="1">The glycine cleavage system catalyzes the degradation of glycine.</text>
</comment>
<comment type="catalytic activity">
    <reaction evidence="1">
        <text>N(6)-[(R)-S(8)-aminomethyldihydrolipoyl]-L-lysyl-[protein] + (6S)-5,6,7,8-tetrahydrofolate = N(6)-[(R)-dihydrolipoyl]-L-lysyl-[protein] + (6R)-5,10-methylene-5,6,7,8-tetrahydrofolate + NH4(+)</text>
        <dbReference type="Rhea" id="RHEA:16945"/>
        <dbReference type="Rhea" id="RHEA-COMP:10475"/>
        <dbReference type="Rhea" id="RHEA-COMP:10492"/>
        <dbReference type="ChEBI" id="CHEBI:15636"/>
        <dbReference type="ChEBI" id="CHEBI:28938"/>
        <dbReference type="ChEBI" id="CHEBI:57453"/>
        <dbReference type="ChEBI" id="CHEBI:83100"/>
        <dbReference type="ChEBI" id="CHEBI:83143"/>
        <dbReference type="EC" id="2.1.2.10"/>
    </reaction>
</comment>
<comment type="subunit">
    <text evidence="1">The glycine cleavage system is composed of four proteins: P, T, L and H.</text>
</comment>
<comment type="similarity">
    <text evidence="1">Belongs to the GcvT family.</text>
</comment>
<gene>
    <name evidence="1" type="primary">gcvT</name>
    <name type="ordered locus">PGN_0550</name>
</gene>